<proteinExistence type="inferred from homology"/>
<dbReference type="EC" id="2.1.1.192" evidence="1"/>
<dbReference type="EMBL" id="CP000851">
    <property type="protein sequence ID" value="ABV86629.1"/>
    <property type="molecule type" value="Genomic_DNA"/>
</dbReference>
<dbReference type="RefSeq" id="WP_012154555.1">
    <property type="nucleotide sequence ID" value="NC_009901.1"/>
</dbReference>
<dbReference type="SMR" id="A8H242"/>
<dbReference type="STRING" id="398579.Spea_1302"/>
<dbReference type="KEGG" id="spl:Spea_1302"/>
<dbReference type="eggNOG" id="COG0820">
    <property type="taxonomic scope" value="Bacteria"/>
</dbReference>
<dbReference type="HOGENOM" id="CLU_029101_0_0_6"/>
<dbReference type="OrthoDB" id="9793973at2"/>
<dbReference type="Proteomes" id="UP000002608">
    <property type="component" value="Chromosome"/>
</dbReference>
<dbReference type="GO" id="GO:0005737">
    <property type="term" value="C:cytoplasm"/>
    <property type="evidence" value="ECO:0007669"/>
    <property type="project" value="UniProtKB-SubCell"/>
</dbReference>
<dbReference type="GO" id="GO:0051539">
    <property type="term" value="F:4 iron, 4 sulfur cluster binding"/>
    <property type="evidence" value="ECO:0007669"/>
    <property type="project" value="UniProtKB-UniRule"/>
</dbReference>
<dbReference type="GO" id="GO:0046872">
    <property type="term" value="F:metal ion binding"/>
    <property type="evidence" value="ECO:0007669"/>
    <property type="project" value="UniProtKB-KW"/>
</dbReference>
<dbReference type="GO" id="GO:0070040">
    <property type="term" value="F:rRNA (adenine(2503)-C2-)-methyltransferase activity"/>
    <property type="evidence" value="ECO:0007669"/>
    <property type="project" value="UniProtKB-UniRule"/>
</dbReference>
<dbReference type="GO" id="GO:0019843">
    <property type="term" value="F:rRNA binding"/>
    <property type="evidence" value="ECO:0007669"/>
    <property type="project" value="UniProtKB-UniRule"/>
</dbReference>
<dbReference type="GO" id="GO:0002935">
    <property type="term" value="F:tRNA (adenine(37)-C2)-methyltransferase activity"/>
    <property type="evidence" value="ECO:0007669"/>
    <property type="project" value="UniProtKB-UniRule"/>
</dbReference>
<dbReference type="GO" id="GO:0000049">
    <property type="term" value="F:tRNA binding"/>
    <property type="evidence" value="ECO:0007669"/>
    <property type="project" value="UniProtKB-UniRule"/>
</dbReference>
<dbReference type="GO" id="GO:0070475">
    <property type="term" value="P:rRNA base methylation"/>
    <property type="evidence" value="ECO:0007669"/>
    <property type="project" value="UniProtKB-UniRule"/>
</dbReference>
<dbReference type="GO" id="GO:0030488">
    <property type="term" value="P:tRNA methylation"/>
    <property type="evidence" value="ECO:0007669"/>
    <property type="project" value="UniProtKB-UniRule"/>
</dbReference>
<dbReference type="CDD" id="cd01335">
    <property type="entry name" value="Radical_SAM"/>
    <property type="match status" value="1"/>
</dbReference>
<dbReference type="FunFam" id="1.10.150.530:FF:000003">
    <property type="entry name" value="Dual-specificity RNA methyltransferase RlmN"/>
    <property type="match status" value="1"/>
</dbReference>
<dbReference type="FunFam" id="3.20.20.70:FF:000008">
    <property type="entry name" value="Dual-specificity RNA methyltransferase RlmN"/>
    <property type="match status" value="1"/>
</dbReference>
<dbReference type="Gene3D" id="1.10.150.530">
    <property type="match status" value="1"/>
</dbReference>
<dbReference type="Gene3D" id="3.20.20.70">
    <property type="entry name" value="Aldolase class I"/>
    <property type="match status" value="1"/>
</dbReference>
<dbReference type="HAMAP" id="MF_01849">
    <property type="entry name" value="RNA_methyltr_RlmN"/>
    <property type="match status" value="1"/>
</dbReference>
<dbReference type="InterPro" id="IPR013785">
    <property type="entry name" value="Aldolase_TIM"/>
</dbReference>
<dbReference type="InterPro" id="IPR040072">
    <property type="entry name" value="Methyltransferase_A"/>
</dbReference>
<dbReference type="InterPro" id="IPR048641">
    <property type="entry name" value="RlmN_N"/>
</dbReference>
<dbReference type="InterPro" id="IPR027492">
    <property type="entry name" value="RNA_MTrfase_RlmN"/>
</dbReference>
<dbReference type="InterPro" id="IPR004383">
    <property type="entry name" value="rRNA_lsu_MTrfase_RlmN/Cfr"/>
</dbReference>
<dbReference type="InterPro" id="IPR007197">
    <property type="entry name" value="rSAM"/>
</dbReference>
<dbReference type="NCBIfam" id="NF008396">
    <property type="entry name" value="PRK11194.1"/>
    <property type="match status" value="1"/>
</dbReference>
<dbReference type="NCBIfam" id="TIGR00048">
    <property type="entry name" value="rRNA_mod_RlmN"/>
    <property type="match status" value="1"/>
</dbReference>
<dbReference type="PANTHER" id="PTHR30544">
    <property type="entry name" value="23S RRNA METHYLTRANSFERASE"/>
    <property type="match status" value="1"/>
</dbReference>
<dbReference type="PANTHER" id="PTHR30544:SF5">
    <property type="entry name" value="RADICAL SAM CORE DOMAIN-CONTAINING PROTEIN"/>
    <property type="match status" value="1"/>
</dbReference>
<dbReference type="Pfam" id="PF04055">
    <property type="entry name" value="Radical_SAM"/>
    <property type="match status" value="1"/>
</dbReference>
<dbReference type="Pfam" id="PF21016">
    <property type="entry name" value="RlmN_N"/>
    <property type="match status" value="1"/>
</dbReference>
<dbReference type="PIRSF" id="PIRSF006004">
    <property type="entry name" value="CHP00048"/>
    <property type="match status" value="1"/>
</dbReference>
<dbReference type="SFLD" id="SFLDF00275">
    <property type="entry name" value="adenosine_C2_methyltransferase"/>
    <property type="match status" value="1"/>
</dbReference>
<dbReference type="SFLD" id="SFLDG01062">
    <property type="entry name" value="methyltransferase_(Class_A)"/>
    <property type="match status" value="1"/>
</dbReference>
<dbReference type="SUPFAM" id="SSF102114">
    <property type="entry name" value="Radical SAM enzymes"/>
    <property type="match status" value="1"/>
</dbReference>
<dbReference type="PROSITE" id="PS51918">
    <property type="entry name" value="RADICAL_SAM"/>
    <property type="match status" value="1"/>
</dbReference>
<accession>A8H242</accession>
<protein>
    <recommendedName>
        <fullName evidence="1">Dual-specificity RNA methyltransferase RlmN</fullName>
        <ecNumber evidence="1">2.1.1.192</ecNumber>
    </recommendedName>
    <alternativeName>
        <fullName evidence="1">23S rRNA (adenine(2503)-C(2))-methyltransferase</fullName>
    </alternativeName>
    <alternativeName>
        <fullName evidence="1">23S rRNA m2A2503 methyltransferase</fullName>
    </alternativeName>
    <alternativeName>
        <fullName evidence="1">Ribosomal RNA large subunit methyltransferase N</fullName>
    </alternativeName>
    <alternativeName>
        <fullName evidence="1">tRNA (adenine(37)-C(2))-methyltransferase</fullName>
    </alternativeName>
    <alternativeName>
        <fullName evidence="1">tRNA m2A37 methyltransferase</fullName>
    </alternativeName>
</protein>
<reference key="1">
    <citation type="submission" date="2007-10" db="EMBL/GenBank/DDBJ databases">
        <title>Complete sequence of Shewanella pealeana ATCC 700345.</title>
        <authorList>
            <consortium name="US DOE Joint Genome Institute"/>
            <person name="Copeland A."/>
            <person name="Lucas S."/>
            <person name="Lapidus A."/>
            <person name="Barry K."/>
            <person name="Glavina del Rio T."/>
            <person name="Dalin E."/>
            <person name="Tice H."/>
            <person name="Pitluck S."/>
            <person name="Chertkov O."/>
            <person name="Brettin T."/>
            <person name="Bruce D."/>
            <person name="Detter J.C."/>
            <person name="Han C."/>
            <person name="Schmutz J."/>
            <person name="Larimer F."/>
            <person name="Land M."/>
            <person name="Hauser L."/>
            <person name="Kyrpides N."/>
            <person name="Kim E."/>
            <person name="Zhao J.-S.Z."/>
            <person name="Manno D."/>
            <person name="Hawari J."/>
            <person name="Richardson P."/>
        </authorList>
    </citation>
    <scope>NUCLEOTIDE SEQUENCE [LARGE SCALE GENOMIC DNA]</scope>
    <source>
        <strain>ATCC 700345 / ANG-SQ1</strain>
    </source>
</reference>
<comment type="function">
    <text evidence="1">Specifically methylates position 2 of adenine 2503 in 23S rRNA and position 2 of adenine 37 in tRNAs. m2A2503 modification seems to play a crucial role in the proofreading step occurring at the peptidyl transferase center and thus would serve to optimize ribosomal fidelity.</text>
</comment>
<comment type="catalytic activity">
    <reaction evidence="1">
        <text>adenosine(2503) in 23S rRNA + 2 reduced [2Fe-2S]-[ferredoxin] + 2 S-adenosyl-L-methionine = 2-methyladenosine(2503) in 23S rRNA + 5'-deoxyadenosine + L-methionine + 2 oxidized [2Fe-2S]-[ferredoxin] + S-adenosyl-L-homocysteine</text>
        <dbReference type="Rhea" id="RHEA:42916"/>
        <dbReference type="Rhea" id="RHEA-COMP:10000"/>
        <dbReference type="Rhea" id="RHEA-COMP:10001"/>
        <dbReference type="Rhea" id="RHEA-COMP:10152"/>
        <dbReference type="Rhea" id="RHEA-COMP:10282"/>
        <dbReference type="ChEBI" id="CHEBI:17319"/>
        <dbReference type="ChEBI" id="CHEBI:33737"/>
        <dbReference type="ChEBI" id="CHEBI:33738"/>
        <dbReference type="ChEBI" id="CHEBI:57844"/>
        <dbReference type="ChEBI" id="CHEBI:57856"/>
        <dbReference type="ChEBI" id="CHEBI:59789"/>
        <dbReference type="ChEBI" id="CHEBI:74411"/>
        <dbReference type="ChEBI" id="CHEBI:74497"/>
        <dbReference type="EC" id="2.1.1.192"/>
    </reaction>
</comment>
<comment type="catalytic activity">
    <reaction evidence="1">
        <text>adenosine(37) in tRNA + 2 reduced [2Fe-2S]-[ferredoxin] + 2 S-adenosyl-L-methionine = 2-methyladenosine(37) in tRNA + 5'-deoxyadenosine + L-methionine + 2 oxidized [2Fe-2S]-[ferredoxin] + S-adenosyl-L-homocysteine</text>
        <dbReference type="Rhea" id="RHEA:43332"/>
        <dbReference type="Rhea" id="RHEA-COMP:10000"/>
        <dbReference type="Rhea" id="RHEA-COMP:10001"/>
        <dbReference type="Rhea" id="RHEA-COMP:10162"/>
        <dbReference type="Rhea" id="RHEA-COMP:10485"/>
        <dbReference type="ChEBI" id="CHEBI:17319"/>
        <dbReference type="ChEBI" id="CHEBI:33737"/>
        <dbReference type="ChEBI" id="CHEBI:33738"/>
        <dbReference type="ChEBI" id="CHEBI:57844"/>
        <dbReference type="ChEBI" id="CHEBI:57856"/>
        <dbReference type="ChEBI" id="CHEBI:59789"/>
        <dbReference type="ChEBI" id="CHEBI:74411"/>
        <dbReference type="ChEBI" id="CHEBI:74497"/>
        <dbReference type="EC" id="2.1.1.192"/>
    </reaction>
</comment>
<comment type="cofactor">
    <cofactor evidence="1">
        <name>[4Fe-4S] cluster</name>
        <dbReference type="ChEBI" id="CHEBI:49883"/>
    </cofactor>
    <text evidence="1">Binds 1 [4Fe-4S] cluster. The cluster is coordinated with 3 cysteines and an exchangeable S-adenosyl-L-methionine.</text>
</comment>
<comment type="subcellular location">
    <subcellularLocation>
        <location evidence="1">Cytoplasm</location>
    </subcellularLocation>
</comment>
<comment type="miscellaneous">
    <text evidence="1">Reaction proceeds by a ping-pong mechanism involving intermediate methylation of a conserved cysteine residue.</text>
</comment>
<comment type="similarity">
    <text evidence="1">Belongs to the radical SAM superfamily. RlmN family.</text>
</comment>
<feature type="chain" id="PRO_0000350401" description="Dual-specificity RNA methyltransferase RlmN">
    <location>
        <begin position="1"/>
        <end position="373"/>
    </location>
</feature>
<feature type="domain" description="Radical SAM core" evidence="2">
    <location>
        <begin position="100"/>
        <end position="339"/>
    </location>
</feature>
<feature type="active site" description="Proton acceptor" evidence="1">
    <location>
        <position position="94"/>
    </location>
</feature>
<feature type="active site" description="S-methylcysteine intermediate" evidence="1">
    <location>
        <position position="344"/>
    </location>
</feature>
<feature type="binding site" evidence="1">
    <location>
        <position position="114"/>
    </location>
    <ligand>
        <name>[4Fe-4S] cluster</name>
        <dbReference type="ChEBI" id="CHEBI:49883"/>
        <note>4Fe-4S-S-AdoMet</note>
    </ligand>
</feature>
<feature type="binding site" evidence="1">
    <location>
        <position position="118"/>
    </location>
    <ligand>
        <name>[4Fe-4S] cluster</name>
        <dbReference type="ChEBI" id="CHEBI:49883"/>
        <note>4Fe-4S-S-AdoMet</note>
    </ligand>
</feature>
<feature type="binding site" evidence="1">
    <location>
        <position position="121"/>
    </location>
    <ligand>
        <name>[4Fe-4S] cluster</name>
        <dbReference type="ChEBI" id="CHEBI:49883"/>
        <note>4Fe-4S-S-AdoMet</note>
    </ligand>
</feature>
<feature type="binding site" evidence="1">
    <location>
        <begin position="168"/>
        <end position="169"/>
    </location>
    <ligand>
        <name>S-adenosyl-L-methionine</name>
        <dbReference type="ChEBI" id="CHEBI:59789"/>
    </ligand>
</feature>
<feature type="binding site" evidence="1">
    <location>
        <position position="200"/>
    </location>
    <ligand>
        <name>S-adenosyl-L-methionine</name>
        <dbReference type="ChEBI" id="CHEBI:59789"/>
    </ligand>
</feature>
<feature type="binding site" evidence="1">
    <location>
        <begin position="222"/>
        <end position="224"/>
    </location>
    <ligand>
        <name>S-adenosyl-L-methionine</name>
        <dbReference type="ChEBI" id="CHEBI:59789"/>
    </ligand>
</feature>
<feature type="binding site" evidence="1">
    <location>
        <position position="301"/>
    </location>
    <ligand>
        <name>S-adenosyl-L-methionine</name>
        <dbReference type="ChEBI" id="CHEBI:59789"/>
    </ligand>
</feature>
<feature type="disulfide bond" description="(transient)" evidence="1">
    <location>
        <begin position="107"/>
        <end position="344"/>
    </location>
</feature>
<gene>
    <name evidence="1" type="primary">rlmN</name>
    <name type="ordered locus">Spea_1302</name>
</gene>
<name>RLMN_SHEPA</name>
<organism>
    <name type="scientific">Shewanella pealeana (strain ATCC 700345 / ANG-SQ1)</name>
    <dbReference type="NCBI Taxonomy" id="398579"/>
    <lineage>
        <taxon>Bacteria</taxon>
        <taxon>Pseudomonadati</taxon>
        <taxon>Pseudomonadota</taxon>
        <taxon>Gammaproteobacteria</taxon>
        <taxon>Alteromonadales</taxon>
        <taxon>Shewanellaceae</taxon>
        <taxon>Shewanella</taxon>
    </lineage>
</organism>
<keyword id="KW-0004">4Fe-4S</keyword>
<keyword id="KW-0963">Cytoplasm</keyword>
<keyword id="KW-1015">Disulfide bond</keyword>
<keyword id="KW-0408">Iron</keyword>
<keyword id="KW-0411">Iron-sulfur</keyword>
<keyword id="KW-0479">Metal-binding</keyword>
<keyword id="KW-0489">Methyltransferase</keyword>
<keyword id="KW-1185">Reference proteome</keyword>
<keyword id="KW-0698">rRNA processing</keyword>
<keyword id="KW-0949">S-adenosyl-L-methionine</keyword>
<keyword id="KW-0808">Transferase</keyword>
<keyword id="KW-0819">tRNA processing</keyword>
<sequence>MSEKKINLLDLDRKALRALFTEMGEKPFRADQLMKWIYHFGVSDFEEMTNINKVLRAKLAAKCEIVAPEISSYQKSVDGTIKFAINVGDGQEVETVYIPEDDRATLCVSSQVGCALECTFCSTAQQGFNRNLTVAEIVGQIWRVADFIGFVKDTGERPITNVVMMGMGEPLLNLKNVIPAMDIMLDDFGFSLSKRRVTLSTSGVVPALDKLGDVLDVALAVSIHAPNDELRDVLVPVNKKYPLEEFLGGIRRYIAKSNANRGRVTVEYVMLDHINDSTDQAHELAKLMKDTPCKVNLIPFNPYPGSPYGRSSNSRIDRFSKVLMEYGLTVIVRKTRGDDIDAACGQLAGDIRDRTKRLAKKQMQQNQISVTIN</sequence>
<evidence type="ECO:0000255" key="1">
    <source>
        <dbReference type="HAMAP-Rule" id="MF_01849"/>
    </source>
</evidence>
<evidence type="ECO:0000255" key="2">
    <source>
        <dbReference type="PROSITE-ProRule" id="PRU01266"/>
    </source>
</evidence>